<name>FND3B_MOUSE</name>
<protein>
    <recommendedName>
        <fullName>Fibronectin type III domain-containing protein 3B</fullName>
    </recommendedName>
    <alternativeName>
        <fullName>Factor for adipocyte differentiation 104</fullName>
    </alternativeName>
    <alternativeName>
        <fullName>HCV NS5A-binding protein 37</fullName>
    </alternativeName>
</protein>
<gene>
    <name type="primary">Fndc3b</name>
    <name type="synonym">Fad104</name>
    <name type="synonym">Kiaa4164</name>
    <name type="synonym">Ns5abp37</name>
</gene>
<organism>
    <name type="scientific">Mus musculus</name>
    <name type="common">Mouse</name>
    <dbReference type="NCBI Taxonomy" id="10090"/>
    <lineage>
        <taxon>Eukaryota</taxon>
        <taxon>Metazoa</taxon>
        <taxon>Chordata</taxon>
        <taxon>Craniata</taxon>
        <taxon>Vertebrata</taxon>
        <taxon>Euteleostomi</taxon>
        <taxon>Mammalia</taxon>
        <taxon>Eutheria</taxon>
        <taxon>Euarchontoglires</taxon>
        <taxon>Glires</taxon>
        <taxon>Rodentia</taxon>
        <taxon>Myomorpha</taxon>
        <taxon>Muroidea</taxon>
        <taxon>Muridae</taxon>
        <taxon>Murinae</taxon>
        <taxon>Mus</taxon>
        <taxon>Mus</taxon>
    </lineage>
</organism>
<feature type="chain" id="PRO_0000284892" description="Fibronectin type III domain-containing protein 3B">
    <location>
        <begin position="1"/>
        <end position="1207"/>
    </location>
</feature>
<feature type="transmembrane region" description="Helical" evidence="2">
    <location>
        <begin position="1185"/>
        <end position="1205"/>
    </location>
</feature>
<feature type="domain" description="Fibronectin type-III 1" evidence="3">
    <location>
        <begin position="281"/>
        <end position="380"/>
    </location>
</feature>
<feature type="domain" description="Fibronectin type-III 2" evidence="3">
    <location>
        <begin position="384"/>
        <end position="476"/>
    </location>
</feature>
<feature type="domain" description="Fibronectin type-III 3" evidence="3">
    <location>
        <begin position="480"/>
        <end position="573"/>
    </location>
</feature>
<feature type="domain" description="Fibronectin type-III 4" evidence="3">
    <location>
        <begin position="577"/>
        <end position="672"/>
    </location>
</feature>
<feature type="domain" description="Fibronectin type-III 5" evidence="3">
    <location>
        <begin position="676"/>
        <end position="768"/>
    </location>
</feature>
<feature type="domain" description="Fibronectin type-III 6" evidence="3">
    <location>
        <begin position="769"/>
        <end position="862"/>
    </location>
</feature>
<feature type="domain" description="Fibronectin type-III 7" evidence="3">
    <location>
        <begin position="874"/>
        <end position="960"/>
    </location>
</feature>
<feature type="domain" description="Fibronectin type-III 8" evidence="3">
    <location>
        <begin position="961"/>
        <end position="1055"/>
    </location>
</feature>
<feature type="domain" description="Fibronectin type-III 9" evidence="3">
    <location>
        <begin position="1059"/>
        <end position="1156"/>
    </location>
</feature>
<feature type="region of interest" description="Disordered" evidence="4">
    <location>
        <begin position="184"/>
        <end position="213"/>
    </location>
</feature>
<feature type="region of interest" description="Disordered" evidence="4">
    <location>
        <begin position="230"/>
        <end position="265"/>
    </location>
</feature>
<feature type="compositionally biased region" description="Gly residues" evidence="4">
    <location>
        <begin position="230"/>
        <end position="246"/>
    </location>
</feature>
<feature type="modified residue" description="Phosphoserine" evidence="6">
    <location>
        <position position="208"/>
    </location>
</feature>
<feature type="modified residue" description="Phosphoserine" evidence="6">
    <location>
        <position position="261"/>
    </location>
</feature>
<feature type="modified residue" description="Phosphoserine" evidence="7">
    <location>
        <position position="396"/>
    </location>
</feature>
<feature type="sequence conflict" description="In Ref. 1; ABA82150, 2; BAC53726 and 3; BAD90222." evidence="5" ref="1 2 3">
    <original>P</original>
    <variation>L</variation>
    <location>
        <position position="608"/>
    </location>
</feature>
<feature type="sequence conflict" description="In Ref. 1; ABA82150, 2; BAC53726 and 3; BAD90222." evidence="5" ref="1 2 3">
    <original>P</original>
    <variation>S</variation>
    <location>
        <position position="619"/>
    </location>
</feature>
<feature type="sequence conflict" description="In Ref. 5; BAE22772." evidence="5" ref="5">
    <original>G</original>
    <variation>E</variation>
    <location>
        <position position="1097"/>
    </location>
</feature>
<feature type="sequence conflict" description="In Ref. 2; BAC53726." evidence="5" ref="2">
    <original>GF</original>
    <variation>AV</variation>
    <location>
        <begin position="1189"/>
        <end position="1190"/>
    </location>
</feature>
<sequence>MYVTMMMTDQIPLELPPLLNGEVAMMPHLVNGEAAQQVILVQVNPGETFTIRAEDGTLQCIQGPAEVPMMSPNGSIPPIHVPPGYISQVIEDSTGVRRVVVTPQSPECYPPSYPSAMSPTHHLPPYLTHHPHFIQNSHTAYYPPVTVPGDMPPQFFPQPHLPPTIYSEPEIIPLYGMSSYVTREDQYSKPPHKKLKDRQIDRQNRLNSPPSTIYKNSCATVYNGYGKGHSGGSSGGGGGGSGGGPGIKKTERRARSSPKSSDSDLQEYELEVKRVQDILSGIEKPQVSNIQARAVVLSWAPPVGLSCGPHGGLSFPYSYEVALSDKGRDGKYKIIYSGEELECNLKDLRPATDYHVRVYAVYNSVKGSCSEPVSFTTHSCAPECPFPPKLAHRSKSSLTLQWKAPIDNGSKITSYLLEWDEGKRNSGFRQCFFGSQKHCKLTKLCPAMGYTFRLAARNDIGTSGYSQEVVCYTLGNIPQMPLAPRLVRAGVTWITLQWSRPEGCSPEEVITYTLDIQEDENDSHFHPKYTGEDLTCTVKNLKRSTQYKFRLTASNMEGKSCPSEVLVCTTSPDRPGPPTRPLIKGPVTSHGFSVKWDAPKDNGGSEIPKYLLEITDGTPEAGQWEVAYSGSATEYVFTHLKPGTLYKLRACCISTGGHSQCSESLPVRTLSLAPGQCRPPRVLGRPKHKGVHLEWDVPASESGCEVSEYSVEMTEPENVASEVYHGPELECTVGNLLPGTVYRFRVRALNDGGYGPYSDVSEITTAAGPPGQCRAPRVSFTPDGCVLVGWESPASPGADISEYRLEWGEDEQSLELVYHGPDTCFEMRDLLPAAQYCCRLQAFNPAGAGPYSELVHCQTPASAPDPVSTLCVLEEEPPSAHPDSPSVCLVLNWEEPCNNGSEILAYNIDLGDSCITVGNTTTHVMKNLLPETTYRIRIQAINEIGVGPFSQFIKAKTRPLPPSPPRLECAASGPQSLKLKWGDSNSKTHAAGDMVYTLQLEDRNKRFISIYRGPSHTYKVQRLTEFTCYSFRIQAMSEAGEGPYSETYTFSTTKSVPPTLKAPRVTQLEGNSCEIFWETVPPMRGDPVSYVLQVLVGRDSEYKQVYKGEEATFQISGLQSNTDYRFRVCACRRCVDTSQELSGAFSPSAAFMLQQREVMLTGDLGGMEEAKMKGMMPTDEQFAALIVLGFATLSILFAFILQYFLMK</sequence>
<proteinExistence type="evidence at protein level"/>
<reference key="1">
    <citation type="journal article" date="2006" name="Dev. Biol.">
        <title>FNDC3A is required for adhesion between spermatids and Sertoli cells.</title>
        <authorList>
            <person name="Obholz K.L."/>
            <person name="Akopyan A."/>
            <person name="Waymire K.G."/>
            <person name="MacGregor G.R."/>
        </authorList>
    </citation>
    <scope>NUCLEOTIDE SEQUENCE [MRNA]</scope>
    <source>
        <strain>C57BL/6J</strain>
    </source>
</reference>
<reference key="2">
    <citation type="submission" date="2002-12" db="EMBL/GenBank/DDBJ databases">
        <title>A novel gene fad104, closely related to adipocyte differentiation.</title>
        <authorList>
            <person name="Tominaga K."/>
            <person name="Kondo C."/>
            <person name="Nishizuka M."/>
            <person name="Imagawa M."/>
        </authorList>
    </citation>
    <scope>NUCLEOTIDE SEQUENCE [MRNA]</scope>
    <source>
        <tissue>Fibroblast</tissue>
    </source>
</reference>
<reference key="3">
    <citation type="submission" date="2005-02" db="EMBL/GenBank/DDBJ databases">
        <title>Prediction of the coding sequences of mouse homologues of KIAA gene. The complete nucleotide sequences of mouse KIAA-homologous cDNAs identified by screening of terminal sequences of cDNA clones randomly sampled from size-fractionated libraries.</title>
        <authorList>
            <person name="Okazaki N."/>
            <person name="Kikuno R.F."/>
            <person name="Ohara R."/>
            <person name="Inamoto S."/>
            <person name="Nagase T."/>
            <person name="Ohara O."/>
            <person name="Koga H."/>
        </authorList>
    </citation>
    <scope>NUCLEOTIDE SEQUENCE [LARGE SCALE MRNA]</scope>
    <source>
        <tissue>Pancreatic islet</tissue>
    </source>
</reference>
<reference key="4">
    <citation type="journal article" date="2004" name="Genome Res.">
        <title>The status, quality, and expansion of the NIH full-length cDNA project: the Mammalian Gene Collection (MGC).</title>
        <authorList>
            <consortium name="The MGC Project Team"/>
        </authorList>
    </citation>
    <scope>NUCLEOTIDE SEQUENCE [LARGE SCALE MRNA]</scope>
    <source>
        <strain>C57BL/6J</strain>
        <tissue>Embryo</tissue>
    </source>
</reference>
<reference key="5">
    <citation type="journal article" date="2005" name="Science">
        <title>The transcriptional landscape of the mammalian genome.</title>
        <authorList>
            <person name="Carninci P."/>
            <person name="Kasukawa T."/>
            <person name="Katayama S."/>
            <person name="Gough J."/>
            <person name="Frith M.C."/>
            <person name="Maeda N."/>
            <person name="Oyama R."/>
            <person name="Ravasi T."/>
            <person name="Lenhard B."/>
            <person name="Wells C."/>
            <person name="Kodzius R."/>
            <person name="Shimokawa K."/>
            <person name="Bajic V.B."/>
            <person name="Brenner S.E."/>
            <person name="Batalov S."/>
            <person name="Forrest A.R."/>
            <person name="Zavolan M."/>
            <person name="Davis M.J."/>
            <person name="Wilming L.G."/>
            <person name="Aidinis V."/>
            <person name="Allen J.E."/>
            <person name="Ambesi-Impiombato A."/>
            <person name="Apweiler R."/>
            <person name="Aturaliya R.N."/>
            <person name="Bailey T.L."/>
            <person name="Bansal M."/>
            <person name="Baxter L."/>
            <person name="Beisel K.W."/>
            <person name="Bersano T."/>
            <person name="Bono H."/>
            <person name="Chalk A.M."/>
            <person name="Chiu K.P."/>
            <person name="Choudhary V."/>
            <person name="Christoffels A."/>
            <person name="Clutterbuck D.R."/>
            <person name="Crowe M.L."/>
            <person name="Dalla E."/>
            <person name="Dalrymple B.P."/>
            <person name="de Bono B."/>
            <person name="Della Gatta G."/>
            <person name="di Bernardo D."/>
            <person name="Down T."/>
            <person name="Engstrom P."/>
            <person name="Fagiolini M."/>
            <person name="Faulkner G."/>
            <person name="Fletcher C.F."/>
            <person name="Fukushima T."/>
            <person name="Furuno M."/>
            <person name="Futaki S."/>
            <person name="Gariboldi M."/>
            <person name="Georgii-Hemming P."/>
            <person name="Gingeras T.R."/>
            <person name="Gojobori T."/>
            <person name="Green R.E."/>
            <person name="Gustincich S."/>
            <person name="Harbers M."/>
            <person name="Hayashi Y."/>
            <person name="Hensch T.K."/>
            <person name="Hirokawa N."/>
            <person name="Hill D."/>
            <person name="Huminiecki L."/>
            <person name="Iacono M."/>
            <person name="Ikeo K."/>
            <person name="Iwama A."/>
            <person name="Ishikawa T."/>
            <person name="Jakt M."/>
            <person name="Kanapin A."/>
            <person name="Katoh M."/>
            <person name="Kawasawa Y."/>
            <person name="Kelso J."/>
            <person name="Kitamura H."/>
            <person name="Kitano H."/>
            <person name="Kollias G."/>
            <person name="Krishnan S.P."/>
            <person name="Kruger A."/>
            <person name="Kummerfeld S.K."/>
            <person name="Kurochkin I.V."/>
            <person name="Lareau L.F."/>
            <person name="Lazarevic D."/>
            <person name="Lipovich L."/>
            <person name="Liu J."/>
            <person name="Liuni S."/>
            <person name="McWilliam S."/>
            <person name="Madan Babu M."/>
            <person name="Madera M."/>
            <person name="Marchionni L."/>
            <person name="Matsuda H."/>
            <person name="Matsuzawa S."/>
            <person name="Miki H."/>
            <person name="Mignone F."/>
            <person name="Miyake S."/>
            <person name="Morris K."/>
            <person name="Mottagui-Tabar S."/>
            <person name="Mulder N."/>
            <person name="Nakano N."/>
            <person name="Nakauchi H."/>
            <person name="Ng P."/>
            <person name="Nilsson R."/>
            <person name="Nishiguchi S."/>
            <person name="Nishikawa S."/>
            <person name="Nori F."/>
            <person name="Ohara O."/>
            <person name="Okazaki Y."/>
            <person name="Orlando V."/>
            <person name="Pang K.C."/>
            <person name="Pavan W.J."/>
            <person name="Pavesi G."/>
            <person name="Pesole G."/>
            <person name="Petrovsky N."/>
            <person name="Piazza S."/>
            <person name="Reed J."/>
            <person name="Reid J.F."/>
            <person name="Ring B.Z."/>
            <person name="Ringwald M."/>
            <person name="Rost B."/>
            <person name="Ruan Y."/>
            <person name="Salzberg S.L."/>
            <person name="Sandelin A."/>
            <person name="Schneider C."/>
            <person name="Schoenbach C."/>
            <person name="Sekiguchi K."/>
            <person name="Semple C.A."/>
            <person name="Seno S."/>
            <person name="Sessa L."/>
            <person name="Sheng Y."/>
            <person name="Shibata Y."/>
            <person name="Shimada H."/>
            <person name="Shimada K."/>
            <person name="Silva D."/>
            <person name="Sinclair B."/>
            <person name="Sperling S."/>
            <person name="Stupka E."/>
            <person name="Sugiura K."/>
            <person name="Sultana R."/>
            <person name="Takenaka Y."/>
            <person name="Taki K."/>
            <person name="Tammoja K."/>
            <person name="Tan S.L."/>
            <person name="Tang S."/>
            <person name="Taylor M.S."/>
            <person name="Tegner J."/>
            <person name="Teichmann S.A."/>
            <person name="Ueda H.R."/>
            <person name="van Nimwegen E."/>
            <person name="Verardo R."/>
            <person name="Wei C.L."/>
            <person name="Yagi K."/>
            <person name="Yamanishi H."/>
            <person name="Zabarovsky E."/>
            <person name="Zhu S."/>
            <person name="Zimmer A."/>
            <person name="Hide W."/>
            <person name="Bult C."/>
            <person name="Grimmond S.M."/>
            <person name="Teasdale R.D."/>
            <person name="Liu E.T."/>
            <person name="Brusic V."/>
            <person name="Quackenbush J."/>
            <person name="Wahlestedt C."/>
            <person name="Mattick J.S."/>
            <person name="Hume D.A."/>
            <person name="Kai C."/>
            <person name="Sasaki D."/>
            <person name="Tomaru Y."/>
            <person name="Fukuda S."/>
            <person name="Kanamori-Katayama M."/>
            <person name="Suzuki M."/>
            <person name="Aoki J."/>
            <person name="Arakawa T."/>
            <person name="Iida J."/>
            <person name="Imamura K."/>
            <person name="Itoh M."/>
            <person name="Kato T."/>
            <person name="Kawaji H."/>
            <person name="Kawagashira N."/>
            <person name="Kawashima T."/>
            <person name="Kojima M."/>
            <person name="Kondo S."/>
            <person name="Konno H."/>
            <person name="Nakano K."/>
            <person name="Ninomiya N."/>
            <person name="Nishio T."/>
            <person name="Okada M."/>
            <person name="Plessy C."/>
            <person name="Shibata K."/>
            <person name="Shiraki T."/>
            <person name="Suzuki S."/>
            <person name="Tagami M."/>
            <person name="Waki K."/>
            <person name="Watahiki A."/>
            <person name="Okamura-Oho Y."/>
            <person name="Suzuki H."/>
            <person name="Kawai J."/>
            <person name="Hayashizaki Y."/>
        </authorList>
    </citation>
    <scope>NUCLEOTIDE SEQUENCE [LARGE SCALE MRNA] OF 1-357 AND 895-1207</scope>
    <source>
        <strain>C57BL/6J</strain>
        <tissue>Egg</tissue>
        <tissue>Embryo</tissue>
    </source>
</reference>
<reference key="6">
    <citation type="submission" date="2003-02" db="EMBL/GenBank/DDBJ databases">
        <title>Identification and sequence analysis of mouse homologous gene of HCV NS5A-binding protein 37.</title>
        <authorList>
            <person name="Cheng J."/>
            <person name="Wang L."/>
            <person name="Li K."/>
        </authorList>
    </citation>
    <scope>NUCLEOTIDE SEQUENCE [MRNA] OF 713-1207</scope>
    <source>
        <strain>C57BL/6J</strain>
    </source>
</reference>
<reference key="7">
    <citation type="journal article" date="2007" name="Proc. Natl. Acad. Sci. U.S.A.">
        <title>Large-scale phosphorylation analysis of mouse liver.</title>
        <authorList>
            <person name="Villen J."/>
            <person name="Beausoleil S.A."/>
            <person name="Gerber S.A."/>
            <person name="Gygi S.P."/>
        </authorList>
    </citation>
    <scope>PHOSPHORYLATION [LARGE SCALE ANALYSIS] AT SER-208 AND SER-261</scope>
    <scope>IDENTIFICATION BY MASS SPECTROMETRY [LARGE SCALE ANALYSIS]</scope>
    <source>
        <tissue>Liver</tissue>
    </source>
</reference>
<reference key="8">
    <citation type="journal article" date="2010" name="Cell">
        <title>A tissue-specific atlas of mouse protein phosphorylation and expression.</title>
        <authorList>
            <person name="Huttlin E.L."/>
            <person name="Jedrychowski M.P."/>
            <person name="Elias J.E."/>
            <person name="Goswami T."/>
            <person name="Rad R."/>
            <person name="Beausoleil S.A."/>
            <person name="Villen J."/>
            <person name="Haas W."/>
            <person name="Sowa M.E."/>
            <person name="Gygi S.P."/>
        </authorList>
    </citation>
    <scope>PHOSPHORYLATION [LARGE SCALE ANALYSIS] AT SER-396</scope>
    <scope>IDENTIFICATION BY MASS SPECTROMETRY [LARGE SCALE ANALYSIS]</scope>
    <source>
        <tissue>Brown adipose tissue</tissue>
        <tissue>Heart</tissue>
        <tissue>Kidney</tissue>
        <tissue>Liver</tissue>
        <tissue>Lung</tissue>
        <tissue>Pancreas</tissue>
    </source>
</reference>
<keyword id="KW-0472">Membrane</keyword>
<keyword id="KW-0597">Phosphoprotein</keyword>
<keyword id="KW-1185">Reference proteome</keyword>
<keyword id="KW-0677">Repeat</keyword>
<keyword id="KW-0812">Transmembrane</keyword>
<keyword id="KW-1133">Transmembrane helix</keyword>
<dbReference type="EMBL" id="DQ192037">
    <property type="protein sequence ID" value="ABA82150.1"/>
    <property type="molecule type" value="mRNA"/>
</dbReference>
<dbReference type="EMBL" id="AB098596">
    <property type="protein sequence ID" value="BAC53726.1"/>
    <property type="molecule type" value="mRNA"/>
</dbReference>
<dbReference type="EMBL" id="AK220297">
    <property type="protein sequence ID" value="BAD90222.1"/>
    <property type="molecule type" value="mRNA"/>
</dbReference>
<dbReference type="EMBL" id="BC067389">
    <property type="protein sequence ID" value="AAH67389.1"/>
    <property type="molecule type" value="mRNA"/>
</dbReference>
<dbReference type="EMBL" id="AK045099">
    <property type="protein sequence ID" value="BAC32222.1"/>
    <property type="molecule type" value="mRNA"/>
</dbReference>
<dbReference type="EMBL" id="AK136013">
    <property type="protein sequence ID" value="BAE22772.1"/>
    <property type="molecule type" value="mRNA"/>
</dbReference>
<dbReference type="EMBL" id="AY234860">
    <property type="protein sequence ID" value="AAO89277.1"/>
    <property type="molecule type" value="mRNA"/>
</dbReference>
<dbReference type="CCDS" id="CCDS17274.1"/>
<dbReference type="RefSeq" id="NP_775274.2">
    <property type="nucleotide sequence ID" value="NM_173182.2"/>
</dbReference>
<dbReference type="RefSeq" id="XP_006535604.1">
    <property type="nucleotide sequence ID" value="XM_006535541.3"/>
</dbReference>
<dbReference type="RefSeq" id="XP_006535606.1">
    <property type="nucleotide sequence ID" value="XM_006535543.3"/>
</dbReference>
<dbReference type="RefSeq" id="XP_006535607.1">
    <property type="nucleotide sequence ID" value="XM_006535544.3"/>
</dbReference>
<dbReference type="RefSeq" id="XP_011248013.1">
    <property type="nucleotide sequence ID" value="XM_011249711.2"/>
</dbReference>
<dbReference type="RefSeq" id="XP_011248014.1">
    <property type="nucleotide sequence ID" value="XM_011249712.2"/>
</dbReference>
<dbReference type="RefSeq" id="XP_017175227.1">
    <property type="nucleotide sequence ID" value="XM_017319738.1"/>
</dbReference>
<dbReference type="SMR" id="Q6NWW9"/>
<dbReference type="BioGRID" id="215090">
    <property type="interactions" value="2"/>
</dbReference>
<dbReference type="FunCoup" id="Q6NWW9">
    <property type="interactions" value="873"/>
</dbReference>
<dbReference type="IntAct" id="Q6NWW9">
    <property type="interactions" value="1"/>
</dbReference>
<dbReference type="MINT" id="Q6NWW9"/>
<dbReference type="STRING" id="10090.ENSMUSP00000141620"/>
<dbReference type="GlyGen" id="Q6NWW9">
    <property type="glycosylation" value="1 site, 1 O-linked glycan (1 site)"/>
</dbReference>
<dbReference type="iPTMnet" id="Q6NWW9"/>
<dbReference type="PhosphoSitePlus" id="Q6NWW9"/>
<dbReference type="jPOST" id="Q6NWW9"/>
<dbReference type="PaxDb" id="10090-ENSMUSP00000041495"/>
<dbReference type="PeptideAtlas" id="Q6NWW9"/>
<dbReference type="ProteomicsDB" id="271787"/>
<dbReference type="Pumba" id="Q6NWW9"/>
<dbReference type="DNASU" id="72007"/>
<dbReference type="GeneID" id="72007"/>
<dbReference type="KEGG" id="mmu:72007"/>
<dbReference type="UCSC" id="uc008otp.2">
    <property type="organism name" value="mouse"/>
</dbReference>
<dbReference type="AGR" id="MGI:1919257"/>
<dbReference type="CTD" id="64778"/>
<dbReference type="MGI" id="MGI:1919257">
    <property type="gene designation" value="Fndc3b"/>
</dbReference>
<dbReference type="eggNOG" id="KOG0613">
    <property type="taxonomic scope" value="Eukaryota"/>
</dbReference>
<dbReference type="InParanoid" id="Q6NWW9"/>
<dbReference type="OrthoDB" id="443915at2759"/>
<dbReference type="PhylomeDB" id="Q6NWW9"/>
<dbReference type="TreeFam" id="TF316401"/>
<dbReference type="BioGRID-ORCS" id="72007">
    <property type="hits" value="4 hits in 78 CRISPR screens"/>
</dbReference>
<dbReference type="ChiTaRS" id="Fndc3b">
    <property type="organism name" value="mouse"/>
</dbReference>
<dbReference type="PRO" id="PR:Q6NWW9"/>
<dbReference type="Proteomes" id="UP000000589">
    <property type="component" value="Unplaced"/>
</dbReference>
<dbReference type="RNAct" id="Q6NWW9">
    <property type="molecule type" value="protein"/>
</dbReference>
<dbReference type="GO" id="GO:0005783">
    <property type="term" value="C:endoplasmic reticulum"/>
    <property type="evidence" value="ECO:0000314"/>
    <property type="project" value="MGI"/>
</dbReference>
<dbReference type="GO" id="GO:0016020">
    <property type="term" value="C:membrane"/>
    <property type="evidence" value="ECO:0007669"/>
    <property type="project" value="UniProtKB-SubCell"/>
</dbReference>
<dbReference type="GO" id="GO:0010761">
    <property type="term" value="P:fibroblast migration"/>
    <property type="evidence" value="ECO:0000315"/>
    <property type="project" value="MGI"/>
</dbReference>
<dbReference type="GO" id="GO:0045668">
    <property type="term" value="P:negative regulation of osteoblast differentiation"/>
    <property type="evidence" value="ECO:0000315"/>
    <property type="project" value="MGI"/>
</dbReference>
<dbReference type="GO" id="GO:0045600">
    <property type="term" value="P:positive regulation of fat cell differentiation"/>
    <property type="evidence" value="ECO:0000314"/>
    <property type="project" value="MGI"/>
</dbReference>
<dbReference type="GO" id="GO:0048146">
    <property type="term" value="P:positive regulation of fibroblast proliferation"/>
    <property type="evidence" value="ECO:0000315"/>
    <property type="project" value="MGI"/>
</dbReference>
<dbReference type="GO" id="GO:0034446">
    <property type="term" value="P:substrate adhesion-dependent cell spreading"/>
    <property type="evidence" value="ECO:0000315"/>
    <property type="project" value="MGI"/>
</dbReference>
<dbReference type="GO" id="GO:0060510">
    <property type="term" value="P:type II pneumocyte differentiation"/>
    <property type="evidence" value="ECO:0000315"/>
    <property type="project" value="MGI"/>
</dbReference>
<dbReference type="CDD" id="cd00063">
    <property type="entry name" value="FN3"/>
    <property type="match status" value="9"/>
</dbReference>
<dbReference type="FunFam" id="2.60.40.10:FF:000175">
    <property type="entry name" value="Fibronectin type III domain containing 3A"/>
    <property type="match status" value="1"/>
</dbReference>
<dbReference type="FunFam" id="2.60.40.10:FF:000180">
    <property type="entry name" value="Fibronectin type III domain containing 3A"/>
    <property type="match status" value="1"/>
</dbReference>
<dbReference type="FunFam" id="2.60.40.10:FF:000185">
    <property type="entry name" value="Fibronectin type III domain containing 3A"/>
    <property type="match status" value="1"/>
</dbReference>
<dbReference type="FunFam" id="2.60.40.10:FF:000195">
    <property type="entry name" value="Fibronectin type III domain containing 3A"/>
    <property type="match status" value="1"/>
</dbReference>
<dbReference type="FunFam" id="2.60.40.10:FF:000210">
    <property type="entry name" value="Fibronectin type III domain containing 3A"/>
    <property type="match status" value="1"/>
</dbReference>
<dbReference type="FunFam" id="2.60.40.10:FF:000309">
    <property type="entry name" value="Fibronectin type III domain containing 3B"/>
    <property type="match status" value="1"/>
</dbReference>
<dbReference type="FunFam" id="2.60.40.10:FF:000396">
    <property type="entry name" value="Fibronectin type III domain containing 3B"/>
    <property type="match status" value="1"/>
</dbReference>
<dbReference type="FunFam" id="2.60.40.10:FF:000603">
    <property type="entry name" value="Fibronectin type III domain containing 3B"/>
    <property type="match status" value="1"/>
</dbReference>
<dbReference type="Gene3D" id="2.60.40.10">
    <property type="entry name" value="Immunoglobulins"/>
    <property type="match status" value="9"/>
</dbReference>
<dbReference type="InterPro" id="IPR050617">
    <property type="entry name" value="E3_ligase_FN3/SPRY"/>
</dbReference>
<dbReference type="InterPro" id="IPR003961">
    <property type="entry name" value="FN3_dom"/>
</dbReference>
<dbReference type="InterPro" id="IPR036116">
    <property type="entry name" value="FN3_sf"/>
</dbReference>
<dbReference type="InterPro" id="IPR013783">
    <property type="entry name" value="Ig-like_fold"/>
</dbReference>
<dbReference type="PANTHER" id="PTHR24099">
    <property type="entry name" value="E3 UBIQUITIN-PROTEIN LIGASE TRIM36-RELATED"/>
    <property type="match status" value="1"/>
</dbReference>
<dbReference type="PANTHER" id="PTHR24099:SF11">
    <property type="entry name" value="FIBRONECTIN TYPE III DOMAIN-CONTAINING 3BA-RELATED"/>
    <property type="match status" value="1"/>
</dbReference>
<dbReference type="Pfam" id="PF00041">
    <property type="entry name" value="fn3"/>
    <property type="match status" value="8"/>
</dbReference>
<dbReference type="PRINTS" id="PR00014">
    <property type="entry name" value="FNTYPEIII"/>
</dbReference>
<dbReference type="SMART" id="SM00060">
    <property type="entry name" value="FN3"/>
    <property type="match status" value="9"/>
</dbReference>
<dbReference type="SUPFAM" id="SSF49265">
    <property type="entry name" value="Fibronectin type III"/>
    <property type="match status" value="5"/>
</dbReference>
<dbReference type="PROSITE" id="PS50853">
    <property type="entry name" value="FN3"/>
    <property type="match status" value="9"/>
</dbReference>
<comment type="function">
    <text>May be positive regulator of adipogenesis.</text>
</comment>
<comment type="subcellular location">
    <subcellularLocation>
        <location evidence="1">Membrane</location>
        <topology evidence="1">Single-pass membrane protein</topology>
    </subcellularLocation>
</comment>
<comment type="similarity">
    <text evidence="5">Belongs to the FNDC3 family.</text>
</comment>
<evidence type="ECO:0000250" key="1"/>
<evidence type="ECO:0000255" key="2"/>
<evidence type="ECO:0000255" key="3">
    <source>
        <dbReference type="PROSITE-ProRule" id="PRU00316"/>
    </source>
</evidence>
<evidence type="ECO:0000256" key="4">
    <source>
        <dbReference type="SAM" id="MobiDB-lite"/>
    </source>
</evidence>
<evidence type="ECO:0000305" key="5"/>
<evidence type="ECO:0007744" key="6">
    <source>
    </source>
</evidence>
<evidence type="ECO:0007744" key="7">
    <source>
    </source>
</evidence>
<accession>Q6NWW9</accession>
<accession>Q3UWZ2</accession>
<accession>Q570Z2</accession>
<accession>Q80YF7</accession>
<accession>Q8BLH9</accession>
<accession>Q8CH86</accession>